<feature type="chain" id="PRO_0000418728" description="Soyasapogenol B glucuronide galactosyltransferase">
    <location>
        <begin position="1"/>
        <end position="495"/>
    </location>
</feature>
<feature type="active site" description="Proton acceptor" evidence="1">
    <location>
        <position position="20"/>
    </location>
</feature>
<feature type="active site" description="Charge relay" evidence="1">
    <location>
        <position position="123"/>
    </location>
</feature>
<feature type="binding site" evidence="2">
    <location>
        <position position="18"/>
    </location>
    <ligand>
        <name>an anthocyanidin</name>
        <dbReference type="ChEBI" id="CHEBI:143576"/>
    </ligand>
</feature>
<feature type="binding site" evidence="2">
    <location>
        <position position="20"/>
    </location>
    <ligand>
        <name>an anthocyanidin</name>
        <dbReference type="ChEBI" id="CHEBI:143576"/>
    </ligand>
</feature>
<feature type="binding site" evidence="3">
    <location>
        <position position="291"/>
    </location>
    <ligand>
        <name>UDP</name>
        <dbReference type="ChEBI" id="CHEBI:58223"/>
    </ligand>
</feature>
<feature type="binding site" evidence="3">
    <location>
        <position position="349"/>
    </location>
    <ligand>
        <name>UDP</name>
        <dbReference type="ChEBI" id="CHEBI:58223"/>
    </ligand>
</feature>
<feature type="binding site" evidence="3">
    <location>
        <position position="350"/>
    </location>
    <ligand>
        <name>UDP</name>
        <dbReference type="ChEBI" id="CHEBI:58223"/>
    </ligand>
</feature>
<feature type="binding site" evidence="3">
    <location>
        <position position="367"/>
    </location>
    <ligand>
        <name>UDP</name>
        <dbReference type="ChEBI" id="CHEBI:58223"/>
    </ligand>
</feature>
<feature type="binding site" evidence="3">
    <location>
        <position position="371"/>
    </location>
    <ligand>
        <name>UDP</name>
        <dbReference type="ChEBI" id="CHEBI:58223"/>
    </ligand>
</feature>
<feature type="binding site" evidence="3">
    <location>
        <position position="372"/>
    </location>
    <ligand>
        <name>UDP</name>
        <dbReference type="ChEBI" id="CHEBI:58223"/>
    </ligand>
</feature>
<feature type="binding site" evidence="3">
    <location>
        <position position="375"/>
    </location>
    <ligand>
        <name>UDP</name>
        <dbReference type="ChEBI" id="CHEBI:58223"/>
    </ligand>
</feature>
<feature type="binding site" evidence="2">
    <location>
        <position position="390"/>
    </location>
    <ligand>
        <name>an anthocyanidin</name>
        <dbReference type="ChEBI" id="CHEBI:143576"/>
    </ligand>
</feature>
<proteinExistence type="evidence at protein level"/>
<gene>
    <name type="primary">GmSGT2</name>
</gene>
<name>SGT2_SOYBN</name>
<sequence>MEKKKGELKSIFLPFLSTSHIIPLVDMARLFALHDVDVTIITTAHNATVFQKSIDLDASRGRPIRTHVVNFPAAQVGLPVGIEAFNVDTPREMTPRIYMGLSLLQQVFEKLFHDLQPDFIVTDMFHPWSVDAAAKLGIPRIMFHGASYLARSAAHSVEQYAPHLEAKFDTDKFVLPGLPDNLEMTRLQLPDWLRSPNQYTELMRTIKQSEKKSYGSLFNSFYDLESAYYEHYKSIMGTKSWGIGPVSLWANQDAQDKAARGYAKEEEEKEGWLKWLNSKAESSVLYVSFGSINKFPYSQLVEIARALEDSGHDFIWVVRKNDGGEGDNFLEEFEKRMKESNKGYLIWGWAPQLLILENPAIGGLVTHCGWNTVVESVNAGLPMATWPLFAEHFFNEKLVVDVLKIGVPVGAKEWRNWNEFGSEVVKREEIGNAIASLMSEEEEDGGMRKRAKELSVAAKSAIKVGGSSHNNMKELIRELKEIKLSKEAQETAPNP</sequence>
<organism>
    <name type="scientific">Glycine max</name>
    <name type="common">Soybean</name>
    <name type="synonym">Glycine hispida</name>
    <dbReference type="NCBI Taxonomy" id="3847"/>
    <lineage>
        <taxon>Eukaryota</taxon>
        <taxon>Viridiplantae</taxon>
        <taxon>Streptophyta</taxon>
        <taxon>Embryophyta</taxon>
        <taxon>Tracheophyta</taxon>
        <taxon>Spermatophyta</taxon>
        <taxon>Magnoliopsida</taxon>
        <taxon>eudicotyledons</taxon>
        <taxon>Gunneridae</taxon>
        <taxon>Pentapetalae</taxon>
        <taxon>rosids</taxon>
        <taxon>fabids</taxon>
        <taxon>Fabales</taxon>
        <taxon>Fabaceae</taxon>
        <taxon>Papilionoideae</taxon>
        <taxon>50 kb inversion clade</taxon>
        <taxon>NPAAA clade</taxon>
        <taxon>indigoferoid/millettioid clade</taxon>
        <taxon>Phaseoleae</taxon>
        <taxon>Glycine</taxon>
        <taxon>Glycine subgen. Soja</taxon>
    </lineage>
</organism>
<keyword id="KW-0328">Glycosyltransferase</keyword>
<keyword id="KW-1185">Reference proteome</keyword>
<keyword id="KW-0808">Transferase</keyword>
<reference key="1">
    <citation type="journal article" date="2010" name="FEBS Lett.">
        <title>Identification and characterization of glycosyltransferases involved in the biosynthesis of soyasaponin I in Glycine max.</title>
        <authorList>
            <person name="Shibuya M."/>
            <person name="Nishimura K."/>
            <person name="Yasuyama N."/>
            <person name="Ebizuka Y."/>
        </authorList>
    </citation>
    <scope>NUCLEOTIDE SEQUENCE [MRNA]</scope>
    <scope>FUNCTION</scope>
    <scope>BIOPHYSICOCHEMICAL PROPERTIES</scope>
    <scope>CATALYTIC ACTIVITY</scope>
</reference>
<reference key="2">
    <citation type="submission" date="2009-08" db="EMBL/GenBank/DDBJ databases">
        <authorList>
            <person name="Cheung F."/>
            <person name="Xiao Y."/>
            <person name="Chan A."/>
            <person name="Moskal W."/>
            <person name="Town C.D."/>
        </authorList>
    </citation>
    <scope>NUCLEOTIDE SEQUENCE [LARGE SCALE MRNA] OF 1-260</scope>
</reference>
<evidence type="ECO:0000250" key="1">
    <source>
        <dbReference type="UniProtKB" id="A0A0A1HA03"/>
    </source>
</evidence>
<evidence type="ECO:0000250" key="2">
    <source>
        <dbReference type="UniProtKB" id="P51094"/>
    </source>
</evidence>
<evidence type="ECO:0000250" key="3">
    <source>
        <dbReference type="UniProtKB" id="Q9M156"/>
    </source>
</evidence>
<evidence type="ECO:0000269" key="4">
    <source>
    </source>
</evidence>
<evidence type="ECO:0000305" key="5"/>
<dbReference type="EC" id="2.4.1.272"/>
<dbReference type="EMBL" id="AB473730">
    <property type="protein sequence ID" value="BAI99584.1"/>
    <property type="molecule type" value="mRNA"/>
</dbReference>
<dbReference type="RefSeq" id="NP_001304384.1">
    <property type="nucleotide sequence ID" value="NM_001317455.1"/>
</dbReference>
<dbReference type="SMR" id="D4Q9Z4"/>
<dbReference type="STRING" id="3847.D4Q9Z4"/>
<dbReference type="CAZy" id="GT1">
    <property type="family name" value="Glycosyltransferase Family 1"/>
</dbReference>
<dbReference type="PaxDb" id="3847-GLYMA11G05680.2"/>
<dbReference type="GeneID" id="100777250"/>
<dbReference type="KEGG" id="ag:BAI99584"/>
<dbReference type="KEGG" id="gmx:100777250"/>
<dbReference type="eggNOG" id="KOG1192">
    <property type="taxonomic scope" value="Eukaryota"/>
</dbReference>
<dbReference type="InParanoid" id="D4Q9Z4"/>
<dbReference type="OrthoDB" id="5835829at2759"/>
<dbReference type="BioCyc" id="MetaCyc:MONOMER-16512"/>
<dbReference type="BRENDA" id="2.4.1.272">
    <property type="organism ID" value="2483"/>
</dbReference>
<dbReference type="SABIO-RK" id="D4Q9Z4"/>
<dbReference type="Proteomes" id="UP000008827">
    <property type="component" value="Unplaced"/>
</dbReference>
<dbReference type="GO" id="GO:0102240">
    <property type="term" value="F:soyasapogenol B glucuronide galactosyltransferase activity"/>
    <property type="evidence" value="ECO:0007669"/>
    <property type="project" value="UniProtKB-EC"/>
</dbReference>
<dbReference type="GO" id="GO:0035251">
    <property type="term" value="F:UDP-glucosyltransferase activity"/>
    <property type="evidence" value="ECO:0000318"/>
    <property type="project" value="GO_Central"/>
</dbReference>
<dbReference type="CDD" id="cd03784">
    <property type="entry name" value="GT1_Gtf-like"/>
    <property type="match status" value="1"/>
</dbReference>
<dbReference type="FunFam" id="3.40.50.2000:FF:000071">
    <property type="entry name" value="Glycosyltransferase"/>
    <property type="match status" value="1"/>
</dbReference>
<dbReference type="FunFam" id="3.40.50.2000:FF:000202">
    <property type="entry name" value="Glycosyltransferase"/>
    <property type="match status" value="1"/>
</dbReference>
<dbReference type="Gene3D" id="3.40.50.2000">
    <property type="entry name" value="Glycogen Phosphorylase B"/>
    <property type="match status" value="2"/>
</dbReference>
<dbReference type="InterPro" id="IPR002213">
    <property type="entry name" value="UDP_glucos_trans"/>
</dbReference>
<dbReference type="InterPro" id="IPR035595">
    <property type="entry name" value="UDP_glycos_trans_CS"/>
</dbReference>
<dbReference type="PANTHER" id="PTHR48047">
    <property type="entry name" value="GLYCOSYLTRANSFERASE"/>
    <property type="match status" value="1"/>
</dbReference>
<dbReference type="PANTHER" id="PTHR48047:SF150">
    <property type="entry name" value="SOLANIDINE UDP-GLUCOSE GLUCOSYLTRANSFERASE 1"/>
    <property type="match status" value="1"/>
</dbReference>
<dbReference type="Pfam" id="PF00201">
    <property type="entry name" value="UDPGT"/>
    <property type="match status" value="1"/>
</dbReference>
<dbReference type="SUPFAM" id="SSF53756">
    <property type="entry name" value="UDP-Glycosyltransferase/glycogen phosphorylase"/>
    <property type="match status" value="1"/>
</dbReference>
<dbReference type="PROSITE" id="PS00375">
    <property type="entry name" value="UDPGT"/>
    <property type="match status" value="1"/>
</dbReference>
<comment type="function">
    <text evidence="4">Glycosyltransferase that transfers a galactosyl group from UDP-galactose to soyasapogenol B monoglucuronide in the biosynthetic pathway for soyasaponins.</text>
</comment>
<comment type="catalytic activity">
    <reaction evidence="4">
        <text>soyasapogenol B 3-O-beta-D-glucuronate + UDP-alpha-D-galactose = soyasaponin III + UDP + H(+)</text>
        <dbReference type="Rhea" id="RHEA:31487"/>
        <dbReference type="ChEBI" id="CHEBI:15378"/>
        <dbReference type="ChEBI" id="CHEBI:58223"/>
        <dbReference type="ChEBI" id="CHEBI:62441"/>
        <dbReference type="ChEBI" id="CHEBI:62911"/>
        <dbReference type="ChEBI" id="CHEBI:66914"/>
        <dbReference type="EC" id="2.4.1.272"/>
    </reaction>
</comment>
<comment type="biophysicochemical properties">
    <kinetics>
        <KM evidence="4">12 uM for soyasapogenol B 3-O-beta-D-glucuronide</KM>
    </kinetics>
</comment>
<comment type="similarity">
    <text evidence="5">Belongs to the UDP-glycosyltransferase family.</text>
</comment>
<protein>
    <recommendedName>
        <fullName>Soyasapogenol B glucuronide galactosyltransferase</fullName>
        <ecNumber>2.4.1.272</ecNumber>
    </recommendedName>
    <alternativeName>
        <fullName>Soyasaponin glycosyltransferase 2</fullName>
    </alternativeName>
    <alternativeName>
        <fullName>UDP-galactose:SBMG-galactosyltransferase</fullName>
    </alternativeName>
</protein>
<accession>D4Q9Z4</accession>